<feature type="chain" id="PRO_0000208047" description="TBC1 domain family member 19">
    <location>
        <begin position="1"/>
        <end position="526"/>
    </location>
</feature>
<feature type="domain" description="Rab-GAP TBC" evidence="1">
    <location>
        <begin position="251"/>
        <end position="472"/>
    </location>
</feature>
<feature type="splice variant" id="VSP_053998" description="In isoform 2." evidence="3">
    <location>
        <begin position="34"/>
        <end position="98"/>
    </location>
</feature>
<feature type="sequence variant" id="VAR_030602" description="In dbSNP:rs16878555.">
    <original>S</original>
    <variation>G</variation>
    <location>
        <position position="241"/>
    </location>
</feature>
<feature type="sequence variant" id="VAR_030603" description="In dbSNP:rs17852970." evidence="2">
    <original>S</original>
    <variation>F</variation>
    <location>
        <position position="509"/>
    </location>
</feature>
<feature type="sequence conflict" description="In Ref. 2; BAA91992." evidence="4" ref="2">
    <original>L</original>
    <variation>P</variation>
    <location>
        <position position="176"/>
    </location>
</feature>
<evidence type="ECO:0000255" key="1">
    <source>
        <dbReference type="PROSITE-ProRule" id="PRU00163"/>
    </source>
</evidence>
<evidence type="ECO:0000269" key="2">
    <source>
    </source>
</evidence>
<evidence type="ECO:0000303" key="3">
    <source>
    </source>
</evidence>
<evidence type="ECO:0000305" key="4"/>
<organism>
    <name type="scientific">Homo sapiens</name>
    <name type="common">Human</name>
    <dbReference type="NCBI Taxonomy" id="9606"/>
    <lineage>
        <taxon>Eukaryota</taxon>
        <taxon>Metazoa</taxon>
        <taxon>Chordata</taxon>
        <taxon>Craniata</taxon>
        <taxon>Vertebrata</taxon>
        <taxon>Euteleostomi</taxon>
        <taxon>Mammalia</taxon>
        <taxon>Eutheria</taxon>
        <taxon>Euarchontoglires</taxon>
        <taxon>Primates</taxon>
        <taxon>Haplorrhini</taxon>
        <taxon>Catarrhini</taxon>
        <taxon>Hominidae</taxon>
        <taxon>Homo</taxon>
    </lineage>
</organism>
<comment type="function">
    <text>May act as a GTPase-activating protein for Rab family protein(s).</text>
</comment>
<comment type="interaction">
    <interactant intactId="EBI-1221022">
        <id>Q8N5T2</id>
    </interactant>
    <interactant intactId="EBI-749530">
        <id>P43365</id>
        <label>MAGEA12</label>
    </interactant>
    <organismsDiffer>false</organismsDiffer>
    <experiments>3</experiments>
</comment>
<comment type="interaction">
    <interactant intactId="EBI-1221022">
        <id>Q8N5T2</id>
    </interactant>
    <interactant intactId="EBI-11978579">
        <id>O95983-2</id>
        <label>MBD3</label>
    </interactant>
    <organismsDiffer>false</organismsDiffer>
    <experiments>3</experiments>
</comment>
<comment type="alternative products">
    <event type="alternative splicing"/>
    <isoform>
        <id>Q8N5T2-1</id>
        <name>1</name>
        <sequence type="displayed"/>
    </isoform>
    <isoform>
        <id>Q8N5T2-2</id>
        <name>2</name>
        <sequence type="described" ref="VSP_053998"/>
    </isoform>
</comment>
<reference key="1">
    <citation type="journal article" date="2009" name="Genes Cells">
        <title>Identification and characterization of a novel Tre-2/Bub2/Cdc16 (TBC) protein that possesses Rab3A-GAP activity.</title>
        <authorList>
            <person name="Ishibashi K."/>
            <person name="Kanno E."/>
            <person name="Itoh T."/>
            <person name="Fukuda M."/>
        </authorList>
    </citation>
    <scope>NUCLEOTIDE SEQUENCE [MRNA] (ISOFORM 2)</scope>
    <source>
        <tissue>Brain</tissue>
    </source>
</reference>
<reference key="2">
    <citation type="journal article" date="2004" name="Nat. Genet.">
        <title>Complete sequencing and characterization of 21,243 full-length human cDNAs.</title>
        <authorList>
            <person name="Ota T."/>
            <person name="Suzuki Y."/>
            <person name="Nishikawa T."/>
            <person name="Otsuki T."/>
            <person name="Sugiyama T."/>
            <person name="Irie R."/>
            <person name="Wakamatsu A."/>
            <person name="Hayashi K."/>
            <person name="Sato H."/>
            <person name="Nagai K."/>
            <person name="Kimura K."/>
            <person name="Makita H."/>
            <person name="Sekine M."/>
            <person name="Obayashi M."/>
            <person name="Nishi T."/>
            <person name="Shibahara T."/>
            <person name="Tanaka T."/>
            <person name="Ishii S."/>
            <person name="Yamamoto J."/>
            <person name="Saito K."/>
            <person name="Kawai Y."/>
            <person name="Isono Y."/>
            <person name="Nakamura Y."/>
            <person name="Nagahari K."/>
            <person name="Murakami K."/>
            <person name="Yasuda T."/>
            <person name="Iwayanagi T."/>
            <person name="Wagatsuma M."/>
            <person name="Shiratori A."/>
            <person name="Sudo H."/>
            <person name="Hosoiri T."/>
            <person name="Kaku Y."/>
            <person name="Kodaira H."/>
            <person name="Kondo H."/>
            <person name="Sugawara M."/>
            <person name="Takahashi M."/>
            <person name="Kanda K."/>
            <person name="Yokoi T."/>
            <person name="Furuya T."/>
            <person name="Kikkawa E."/>
            <person name="Omura Y."/>
            <person name="Abe K."/>
            <person name="Kamihara K."/>
            <person name="Katsuta N."/>
            <person name="Sato K."/>
            <person name="Tanikawa M."/>
            <person name="Yamazaki M."/>
            <person name="Ninomiya K."/>
            <person name="Ishibashi T."/>
            <person name="Yamashita H."/>
            <person name="Murakawa K."/>
            <person name="Fujimori K."/>
            <person name="Tanai H."/>
            <person name="Kimata M."/>
            <person name="Watanabe M."/>
            <person name="Hiraoka S."/>
            <person name="Chiba Y."/>
            <person name="Ishida S."/>
            <person name="Ono Y."/>
            <person name="Takiguchi S."/>
            <person name="Watanabe S."/>
            <person name="Yosida M."/>
            <person name="Hotuta T."/>
            <person name="Kusano J."/>
            <person name="Kanehori K."/>
            <person name="Takahashi-Fujii A."/>
            <person name="Hara H."/>
            <person name="Tanase T.-O."/>
            <person name="Nomura Y."/>
            <person name="Togiya S."/>
            <person name="Komai F."/>
            <person name="Hara R."/>
            <person name="Takeuchi K."/>
            <person name="Arita M."/>
            <person name="Imose N."/>
            <person name="Musashino K."/>
            <person name="Yuuki H."/>
            <person name="Oshima A."/>
            <person name="Sasaki N."/>
            <person name="Aotsuka S."/>
            <person name="Yoshikawa Y."/>
            <person name="Matsunawa H."/>
            <person name="Ichihara T."/>
            <person name="Shiohata N."/>
            <person name="Sano S."/>
            <person name="Moriya S."/>
            <person name="Momiyama H."/>
            <person name="Satoh N."/>
            <person name="Takami S."/>
            <person name="Terashima Y."/>
            <person name="Suzuki O."/>
            <person name="Nakagawa S."/>
            <person name="Senoh A."/>
            <person name="Mizoguchi H."/>
            <person name="Goto Y."/>
            <person name="Shimizu F."/>
            <person name="Wakebe H."/>
            <person name="Hishigaki H."/>
            <person name="Watanabe T."/>
            <person name="Sugiyama A."/>
            <person name="Takemoto M."/>
            <person name="Kawakami B."/>
            <person name="Yamazaki M."/>
            <person name="Watanabe K."/>
            <person name="Kumagai A."/>
            <person name="Itakura S."/>
            <person name="Fukuzumi Y."/>
            <person name="Fujimori Y."/>
            <person name="Komiyama M."/>
            <person name="Tashiro H."/>
            <person name="Tanigami A."/>
            <person name="Fujiwara T."/>
            <person name="Ono T."/>
            <person name="Yamada K."/>
            <person name="Fujii Y."/>
            <person name="Ozaki K."/>
            <person name="Hirao M."/>
            <person name="Ohmori Y."/>
            <person name="Kawabata A."/>
            <person name="Hikiji T."/>
            <person name="Kobatake N."/>
            <person name="Inagaki H."/>
            <person name="Ikema Y."/>
            <person name="Okamoto S."/>
            <person name="Okitani R."/>
            <person name="Kawakami T."/>
            <person name="Noguchi S."/>
            <person name="Itoh T."/>
            <person name="Shigeta K."/>
            <person name="Senba T."/>
            <person name="Matsumura K."/>
            <person name="Nakajima Y."/>
            <person name="Mizuno T."/>
            <person name="Morinaga M."/>
            <person name="Sasaki M."/>
            <person name="Togashi T."/>
            <person name="Oyama M."/>
            <person name="Hata H."/>
            <person name="Watanabe M."/>
            <person name="Komatsu T."/>
            <person name="Mizushima-Sugano J."/>
            <person name="Satoh T."/>
            <person name="Shirai Y."/>
            <person name="Takahashi Y."/>
            <person name="Nakagawa K."/>
            <person name="Okumura K."/>
            <person name="Nagase T."/>
            <person name="Nomura N."/>
            <person name="Kikuchi H."/>
            <person name="Masuho Y."/>
            <person name="Yamashita R."/>
            <person name="Nakai K."/>
            <person name="Yada T."/>
            <person name="Nakamura Y."/>
            <person name="Ohara O."/>
            <person name="Isogai T."/>
            <person name="Sugano S."/>
        </authorList>
    </citation>
    <scope>NUCLEOTIDE SEQUENCE [LARGE SCALE MRNA] (ISOFORM 1)</scope>
    <source>
        <tissue>Placenta</tissue>
    </source>
</reference>
<reference key="3">
    <citation type="journal article" date="2005" name="Nature">
        <title>Generation and annotation of the DNA sequences of human chromosomes 2 and 4.</title>
        <authorList>
            <person name="Hillier L.W."/>
            <person name="Graves T.A."/>
            <person name="Fulton R.S."/>
            <person name="Fulton L.A."/>
            <person name="Pepin K.H."/>
            <person name="Minx P."/>
            <person name="Wagner-McPherson C."/>
            <person name="Layman D."/>
            <person name="Wylie K."/>
            <person name="Sekhon M."/>
            <person name="Becker M.C."/>
            <person name="Fewell G.A."/>
            <person name="Delehaunty K.D."/>
            <person name="Miner T.L."/>
            <person name="Nash W.E."/>
            <person name="Kremitzki C."/>
            <person name="Oddy L."/>
            <person name="Du H."/>
            <person name="Sun H."/>
            <person name="Bradshaw-Cordum H."/>
            <person name="Ali J."/>
            <person name="Carter J."/>
            <person name="Cordes M."/>
            <person name="Harris A."/>
            <person name="Isak A."/>
            <person name="van Brunt A."/>
            <person name="Nguyen C."/>
            <person name="Du F."/>
            <person name="Courtney L."/>
            <person name="Kalicki J."/>
            <person name="Ozersky P."/>
            <person name="Abbott S."/>
            <person name="Armstrong J."/>
            <person name="Belter E.A."/>
            <person name="Caruso L."/>
            <person name="Cedroni M."/>
            <person name="Cotton M."/>
            <person name="Davidson T."/>
            <person name="Desai A."/>
            <person name="Elliott G."/>
            <person name="Erb T."/>
            <person name="Fronick C."/>
            <person name="Gaige T."/>
            <person name="Haakenson W."/>
            <person name="Haglund K."/>
            <person name="Holmes A."/>
            <person name="Harkins R."/>
            <person name="Kim K."/>
            <person name="Kruchowski S.S."/>
            <person name="Strong C.M."/>
            <person name="Grewal N."/>
            <person name="Goyea E."/>
            <person name="Hou S."/>
            <person name="Levy A."/>
            <person name="Martinka S."/>
            <person name="Mead K."/>
            <person name="McLellan M.D."/>
            <person name="Meyer R."/>
            <person name="Randall-Maher J."/>
            <person name="Tomlinson C."/>
            <person name="Dauphin-Kohlberg S."/>
            <person name="Kozlowicz-Reilly A."/>
            <person name="Shah N."/>
            <person name="Swearengen-Shahid S."/>
            <person name="Snider J."/>
            <person name="Strong J.T."/>
            <person name="Thompson J."/>
            <person name="Yoakum M."/>
            <person name="Leonard S."/>
            <person name="Pearman C."/>
            <person name="Trani L."/>
            <person name="Radionenko M."/>
            <person name="Waligorski J.E."/>
            <person name="Wang C."/>
            <person name="Rock S.M."/>
            <person name="Tin-Wollam A.-M."/>
            <person name="Maupin R."/>
            <person name="Latreille P."/>
            <person name="Wendl M.C."/>
            <person name="Yang S.-P."/>
            <person name="Pohl C."/>
            <person name="Wallis J.W."/>
            <person name="Spieth J."/>
            <person name="Bieri T.A."/>
            <person name="Berkowicz N."/>
            <person name="Nelson J.O."/>
            <person name="Osborne J."/>
            <person name="Ding L."/>
            <person name="Meyer R."/>
            <person name="Sabo A."/>
            <person name="Shotland Y."/>
            <person name="Sinha P."/>
            <person name="Wohldmann P.E."/>
            <person name="Cook L.L."/>
            <person name="Hickenbotham M.T."/>
            <person name="Eldred J."/>
            <person name="Williams D."/>
            <person name="Jones T.A."/>
            <person name="She X."/>
            <person name="Ciccarelli F.D."/>
            <person name="Izaurralde E."/>
            <person name="Taylor J."/>
            <person name="Schmutz J."/>
            <person name="Myers R.M."/>
            <person name="Cox D.R."/>
            <person name="Huang X."/>
            <person name="McPherson J.D."/>
            <person name="Mardis E.R."/>
            <person name="Clifton S.W."/>
            <person name="Warren W.C."/>
            <person name="Chinwalla A.T."/>
            <person name="Eddy S.R."/>
            <person name="Marra M.A."/>
            <person name="Ovcharenko I."/>
            <person name="Furey T.S."/>
            <person name="Miller W."/>
            <person name="Eichler E.E."/>
            <person name="Bork P."/>
            <person name="Suyama M."/>
            <person name="Torrents D."/>
            <person name="Waterston R.H."/>
            <person name="Wilson R.K."/>
        </authorList>
    </citation>
    <scope>NUCLEOTIDE SEQUENCE [LARGE SCALE GENOMIC DNA]</scope>
</reference>
<reference key="4">
    <citation type="journal article" date="2004" name="Genome Res.">
        <title>The status, quality, and expansion of the NIH full-length cDNA project: the Mammalian Gene Collection (MGC).</title>
        <authorList>
            <consortium name="The MGC Project Team"/>
        </authorList>
    </citation>
    <scope>NUCLEOTIDE SEQUENCE [LARGE SCALE MRNA] (ISOFORM 1)</scope>
    <scope>VARIANT PHE-509</scope>
    <source>
        <tissue>Brain</tissue>
    </source>
</reference>
<dbReference type="EMBL" id="AB449905">
    <property type="protein sequence ID" value="BAH16648.1"/>
    <property type="molecule type" value="mRNA"/>
</dbReference>
<dbReference type="EMBL" id="AK001944">
    <property type="protein sequence ID" value="BAA91992.1"/>
    <property type="molecule type" value="mRNA"/>
</dbReference>
<dbReference type="EMBL" id="AC093807">
    <property type="status" value="NOT_ANNOTATED_CDS"/>
    <property type="molecule type" value="Genomic_DNA"/>
</dbReference>
<dbReference type="EMBL" id="AC107390">
    <property type="status" value="NOT_ANNOTATED_CDS"/>
    <property type="molecule type" value="Genomic_DNA"/>
</dbReference>
<dbReference type="EMBL" id="BC031642">
    <property type="protein sequence ID" value="AAH31642.1"/>
    <property type="molecule type" value="mRNA"/>
</dbReference>
<dbReference type="CCDS" id="CCDS3439.1">
    <molecule id="Q8N5T2-1"/>
</dbReference>
<dbReference type="CCDS" id="CCDS75115.1">
    <molecule id="Q8N5T2-2"/>
</dbReference>
<dbReference type="RefSeq" id="NP_001278983.1">
    <molecule id="Q8N5T2-2"/>
    <property type="nucleotide sequence ID" value="NM_001292054.2"/>
</dbReference>
<dbReference type="RefSeq" id="NP_060787.2">
    <molecule id="Q8N5T2-1"/>
    <property type="nucleotide sequence ID" value="NM_018317.4"/>
</dbReference>
<dbReference type="SMR" id="Q8N5T2"/>
<dbReference type="BioGRID" id="120583">
    <property type="interactions" value="18"/>
</dbReference>
<dbReference type="FunCoup" id="Q8N5T2">
    <property type="interactions" value="677"/>
</dbReference>
<dbReference type="IntAct" id="Q8N5T2">
    <property type="interactions" value="12"/>
</dbReference>
<dbReference type="MINT" id="Q8N5T2"/>
<dbReference type="STRING" id="9606.ENSP00000264866"/>
<dbReference type="GlyGen" id="Q8N5T2">
    <property type="glycosylation" value="1 site, 1 O-linked glycan (1 site)"/>
</dbReference>
<dbReference type="iPTMnet" id="Q8N5T2"/>
<dbReference type="PhosphoSitePlus" id="Q8N5T2"/>
<dbReference type="BioMuta" id="TBC1D19"/>
<dbReference type="DMDM" id="296452921"/>
<dbReference type="jPOST" id="Q8N5T2"/>
<dbReference type="MassIVE" id="Q8N5T2"/>
<dbReference type="PaxDb" id="9606-ENSP00000264866"/>
<dbReference type="PeptideAtlas" id="Q8N5T2"/>
<dbReference type="ProteomicsDB" id="72094">
    <molecule id="Q8N5T2-1"/>
</dbReference>
<dbReference type="ProteomicsDB" id="7517"/>
<dbReference type="Pumba" id="Q8N5T2"/>
<dbReference type="Antibodypedia" id="23261">
    <property type="antibodies" value="57 antibodies from 16 providers"/>
</dbReference>
<dbReference type="DNASU" id="55296"/>
<dbReference type="Ensembl" id="ENST00000264866.9">
    <molecule id="Q8N5T2-1"/>
    <property type="protein sequence ID" value="ENSP00000264866.4"/>
    <property type="gene ID" value="ENSG00000109680.11"/>
</dbReference>
<dbReference type="Ensembl" id="ENST00000511789.5">
    <molecule id="Q8N5T2-2"/>
    <property type="protein sequence ID" value="ENSP00000425569.1"/>
    <property type="gene ID" value="ENSG00000109680.11"/>
</dbReference>
<dbReference type="GeneID" id="55296"/>
<dbReference type="KEGG" id="hsa:55296"/>
<dbReference type="MANE-Select" id="ENST00000264866.9">
    <property type="protein sequence ID" value="ENSP00000264866.4"/>
    <property type="RefSeq nucleotide sequence ID" value="NM_018317.4"/>
    <property type="RefSeq protein sequence ID" value="NP_060787.2"/>
</dbReference>
<dbReference type="UCSC" id="uc003gsf.5">
    <molecule id="Q8N5T2-1"/>
    <property type="organism name" value="human"/>
</dbReference>
<dbReference type="AGR" id="HGNC:25624"/>
<dbReference type="CTD" id="55296"/>
<dbReference type="DisGeNET" id="55296"/>
<dbReference type="GeneCards" id="TBC1D19"/>
<dbReference type="HGNC" id="HGNC:25624">
    <property type="gene designation" value="TBC1D19"/>
</dbReference>
<dbReference type="HPA" id="ENSG00000109680">
    <property type="expression patterns" value="Low tissue specificity"/>
</dbReference>
<dbReference type="neXtProt" id="NX_Q8N5T2"/>
<dbReference type="OpenTargets" id="ENSG00000109680"/>
<dbReference type="PharmGKB" id="PA134980991"/>
<dbReference type="VEuPathDB" id="HostDB:ENSG00000109680"/>
<dbReference type="eggNOG" id="ENOG502QSFR">
    <property type="taxonomic scope" value="Eukaryota"/>
</dbReference>
<dbReference type="GeneTree" id="ENSGT00390000015965"/>
<dbReference type="HOGENOM" id="CLU_037252_1_0_1"/>
<dbReference type="InParanoid" id="Q8N5T2"/>
<dbReference type="OMA" id="VFKWIMR"/>
<dbReference type="OrthoDB" id="10249775at2759"/>
<dbReference type="PAN-GO" id="Q8N5T2">
    <property type="GO annotations" value="0 GO annotations based on evolutionary models"/>
</dbReference>
<dbReference type="PhylomeDB" id="Q8N5T2"/>
<dbReference type="TreeFam" id="TF323848"/>
<dbReference type="PathwayCommons" id="Q8N5T2"/>
<dbReference type="SignaLink" id="Q8N5T2"/>
<dbReference type="BioGRID-ORCS" id="55296">
    <property type="hits" value="13 hits in 1156 CRISPR screens"/>
</dbReference>
<dbReference type="ChiTaRS" id="TBC1D19">
    <property type="organism name" value="human"/>
</dbReference>
<dbReference type="GenomeRNAi" id="55296"/>
<dbReference type="Pharos" id="Q8N5T2">
    <property type="development level" value="Tdark"/>
</dbReference>
<dbReference type="PRO" id="PR:Q8N5T2"/>
<dbReference type="Proteomes" id="UP000005640">
    <property type="component" value="Chromosome 4"/>
</dbReference>
<dbReference type="RNAct" id="Q8N5T2">
    <property type="molecule type" value="protein"/>
</dbReference>
<dbReference type="Bgee" id="ENSG00000109680">
    <property type="expression patterns" value="Expressed in sperm and 121 other cell types or tissues"/>
</dbReference>
<dbReference type="ExpressionAtlas" id="Q8N5T2">
    <property type="expression patterns" value="baseline and differential"/>
</dbReference>
<dbReference type="GO" id="GO:0005096">
    <property type="term" value="F:GTPase activator activity"/>
    <property type="evidence" value="ECO:0007669"/>
    <property type="project" value="UniProtKB-KW"/>
</dbReference>
<dbReference type="Gene3D" id="1.10.472.80">
    <property type="entry name" value="Ypt/Rab-GAP domain of gyp1p, domain 3"/>
    <property type="match status" value="1"/>
</dbReference>
<dbReference type="InterPro" id="IPR000195">
    <property type="entry name" value="Rab-GAP-TBC_dom"/>
</dbReference>
<dbReference type="InterPro" id="IPR035969">
    <property type="entry name" value="Rab-GAP_TBC_sf"/>
</dbReference>
<dbReference type="InterPro" id="IPR042507">
    <property type="entry name" value="TBC1D19"/>
</dbReference>
<dbReference type="PANTHER" id="PTHR16110">
    <property type="entry name" value="TBC1 DOMAIN FAMILY MEMBER 19"/>
    <property type="match status" value="1"/>
</dbReference>
<dbReference type="PANTHER" id="PTHR16110:SF1">
    <property type="entry name" value="TBC1 DOMAIN FAMILY MEMBER 19"/>
    <property type="match status" value="1"/>
</dbReference>
<dbReference type="Pfam" id="PF00566">
    <property type="entry name" value="RabGAP-TBC"/>
    <property type="match status" value="1"/>
</dbReference>
<dbReference type="SMART" id="SM00164">
    <property type="entry name" value="TBC"/>
    <property type="match status" value="1"/>
</dbReference>
<dbReference type="SUPFAM" id="SSF47923">
    <property type="entry name" value="Ypt/Rab-GAP domain of gyp1p"/>
    <property type="match status" value="2"/>
</dbReference>
<dbReference type="PROSITE" id="PS50086">
    <property type="entry name" value="TBC_RABGAP"/>
    <property type="match status" value="1"/>
</dbReference>
<accession>Q8N5T2</accession>
<accession>B9A6M0</accession>
<accession>Q9NUX1</accession>
<sequence length="526" mass="60208">MLQEESDLSLIIAQIVQKLKGSNLYSQLERQAWASLQRPEIKLESLKEDIKEFFKISGWEKKLQNAVYSELSVFPLPSHPAAPPEHLKEPLVYMRKAQGSWEKRILKSLNSMCTELSIPLARKRPVGEQKELLNKWNEMGTDEPDLSLFRPVYAPKDFLEVLINLRNPNYENGDSLSFRTHLGLIQVPLKVKDIPELKECFVELGLNIGQLGIDDSTQVPPELFENEHVRIGQKVLAEQDSAAAQQYIRQGSPTALRAELWALILNISSQPEDVLYYEQLKTNVIQHDLLVDSLIYKDVKLTASNDDYYFVFEDYLYQVLLCFSRDTSVLSHFAFNSASPPKSYIRGKLGLEEYAVFYPPNGVIPFHGFSMYVAPLCFLYHEPSKLYQIFREMYVRFFFRLHSISSHPSGIVSLCLLFETLLQTYLPQLFYHLREIGAQPLRISFKWMVRAFSGYLATDQLLLLWDRILGYNSLEILAVLAAAVFAFRAVNLMEVTSLAAAEAVLADLSTLKVMPLLQIFLFATVT</sequence>
<gene>
    <name type="primary">TBC1D19</name>
</gene>
<proteinExistence type="evidence at protein level"/>
<keyword id="KW-0025">Alternative splicing</keyword>
<keyword id="KW-0343">GTPase activation</keyword>
<keyword id="KW-1267">Proteomics identification</keyword>
<keyword id="KW-1185">Reference proteome</keyword>
<protein>
    <recommendedName>
        <fullName>TBC1 domain family member 19</fullName>
    </recommendedName>
</protein>
<name>TBC19_HUMAN</name>